<protein>
    <recommendedName>
        <fullName evidence="1">Glutamate racemase</fullName>
        <ecNumber evidence="1">5.1.1.3</ecNumber>
    </recommendedName>
</protein>
<proteinExistence type="inferred from homology"/>
<name>MURI_SYNSC</name>
<comment type="function">
    <text evidence="1">Provides the (R)-glutamate required for cell wall biosynthesis.</text>
</comment>
<comment type="catalytic activity">
    <reaction evidence="1">
        <text>L-glutamate = D-glutamate</text>
        <dbReference type="Rhea" id="RHEA:12813"/>
        <dbReference type="ChEBI" id="CHEBI:29985"/>
        <dbReference type="ChEBI" id="CHEBI:29986"/>
        <dbReference type="EC" id="5.1.1.3"/>
    </reaction>
</comment>
<comment type="pathway">
    <text evidence="1">Cell wall biogenesis; peptidoglycan biosynthesis.</text>
</comment>
<comment type="similarity">
    <text evidence="1">Belongs to the aspartate/glutamate racemases family.</text>
</comment>
<dbReference type="EC" id="5.1.1.3" evidence="1"/>
<dbReference type="EMBL" id="CP000110">
    <property type="protein sequence ID" value="ABB34891.1"/>
    <property type="molecule type" value="Genomic_DNA"/>
</dbReference>
<dbReference type="RefSeq" id="WP_011364112.1">
    <property type="nucleotide sequence ID" value="NC_007516.1"/>
</dbReference>
<dbReference type="SMR" id="Q3AKJ1"/>
<dbReference type="STRING" id="110662.Syncc9605_1136"/>
<dbReference type="KEGG" id="syd:Syncc9605_1136"/>
<dbReference type="eggNOG" id="COG0796">
    <property type="taxonomic scope" value="Bacteria"/>
</dbReference>
<dbReference type="HOGENOM" id="CLU_052344_0_2_3"/>
<dbReference type="OrthoDB" id="9801055at2"/>
<dbReference type="UniPathway" id="UPA00219"/>
<dbReference type="GO" id="GO:0008881">
    <property type="term" value="F:glutamate racemase activity"/>
    <property type="evidence" value="ECO:0007669"/>
    <property type="project" value="UniProtKB-UniRule"/>
</dbReference>
<dbReference type="GO" id="GO:0071555">
    <property type="term" value="P:cell wall organization"/>
    <property type="evidence" value="ECO:0007669"/>
    <property type="project" value="UniProtKB-KW"/>
</dbReference>
<dbReference type="GO" id="GO:0009252">
    <property type="term" value="P:peptidoglycan biosynthetic process"/>
    <property type="evidence" value="ECO:0007669"/>
    <property type="project" value="UniProtKB-UniRule"/>
</dbReference>
<dbReference type="GO" id="GO:0008360">
    <property type="term" value="P:regulation of cell shape"/>
    <property type="evidence" value="ECO:0007669"/>
    <property type="project" value="UniProtKB-KW"/>
</dbReference>
<dbReference type="FunFam" id="3.40.50.1860:FF:000001">
    <property type="entry name" value="Glutamate racemase"/>
    <property type="match status" value="1"/>
</dbReference>
<dbReference type="Gene3D" id="3.40.50.1860">
    <property type="match status" value="2"/>
</dbReference>
<dbReference type="HAMAP" id="MF_00258">
    <property type="entry name" value="Glu_racemase"/>
    <property type="match status" value="1"/>
</dbReference>
<dbReference type="InterPro" id="IPR015942">
    <property type="entry name" value="Asp/Glu/hydantoin_racemase"/>
</dbReference>
<dbReference type="InterPro" id="IPR001920">
    <property type="entry name" value="Asp/Glu_race"/>
</dbReference>
<dbReference type="InterPro" id="IPR033134">
    <property type="entry name" value="Asp/Glu_racemase_AS_2"/>
</dbReference>
<dbReference type="InterPro" id="IPR004391">
    <property type="entry name" value="Glu_race"/>
</dbReference>
<dbReference type="NCBIfam" id="TIGR00067">
    <property type="entry name" value="glut_race"/>
    <property type="match status" value="1"/>
</dbReference>
<dbReference type="PANTHER" id="PTHR21198">
    <property type="entry name" value="GLUTAMATE RACEMASE"/>
    <property type="match status" value="1"/>
</dbReference>
<dbReference type="PANTHER" id="PTHR21198:SF2">
    <property type="entry name" value="GLUTAMATE RACEMASE"/>
    <property type="match status" value="1"/>
</dbReference>
<dbReference type="Pfam" id="PF01177">
    <property type="entry name" value="Asp_Glu_race"/>
    <property type="match status" value="1"/>
</dbReference>
<dbReference type="SUPFAM" id="SSF53681">
    <property type="entry name" value="Aspartate/glutamate racemase"/>
    <property type="match status" value="2"/>
</dbReference>
<dbReference type="PROSITE" id="PS00924">
    <property type="entry name" value="ASP_GLU_RACEMASE_2"/>
    <property type="match status" value="1"/>
</dbReference>
<sequence length="265" mass="28173">MTPQLLGFFDSGLGGLTVLRRVLERHGSVPCVYLGDTARVPYGNRQPDDIRRIAAEVVGWLRDQKVSTVVMACNTTNALARDVADGQAGAPVIGLIGAAAAMVETRRVGVLATPATVASSAYRASIEALHPGSMVIEQACPAFVPLIESGDMNSDDLRRAAQAYLEPLLAASVESIVLGCTHYPLLVPLLRQLLPESVQIIDPAIGVARQLDAVLRSPGPISAVPRPFSLESCRFCVTADPDGFAMRATPWLGQRPDVSLQLLPD</sequence>
<keyword id="KW-0133">Cell shape</keyword>
<keyword id="KW-0961">Cell wall biogenesis/degradation</keyword>
<keyword id="KW-0413">Isomerase</keyword>
<keyword id="KW-0573">Peptidoglycan synthesis</keyword>
<evidence type="ECO:0000255" key="1">
    <source>
        <dbReference type="HAMAP-Rule" id="MF_00258"/>
    </source>
</evidence>
<gene>
    <name evidence="1" type="primary">murI</name>
    <name type="ordered locus">Syncc9605_1136</name>
</gene>
<feature type="chain" id="PRO_1000078582" description="Glutamate racemase">
    <location>
        <begin position="1"/>
        <end position="265"/>
    </location>
</feature>
<feature type="active site" description="Proton donor/acceptor" evidence="1">
    <location>
        <position position="73"/>
    </location>
</feature>
<feature type="active site" description="Proton donor/acceptor" evidence="1">
    <location>
        <position position="180"/>
    </location>
</feature>
<feature type="binding site" evidence="1">
    <location>
        <begin position="10"/>
        <end position="11"/>
    </location>
    <ligand>
        <name>substrate</name>
    </ligand>
</feature>
<feature type="binding site" evidence="1">
    <location>
        <begin position="42"/>
        <end position="43"/>
    </location>
    <ligand>
        <name>substrate</name>
    </ligand>
</feature>
<feature type="binding site" evidence="1">
    <location>
        <begin position="74"/>
        <end position="75"/>
    </location>
    <ligand>
        <name>substrate</name>
    </ligand>
</feature>
<feature type="binding site" evidence="1">
    <location>
        <begin position="181"/>
        <end position="182"/>
    </location>
    <ligand>
        <name>substrate</name>
    </ligand>
</feature>
<accession>Q3AKJ1</accession>
<reference key="1">
    <citation type="submission" date="2005-07" db="EMBL/GenBank/DDBJ databases">
        <title>Complete sequence of Synechococcus sp. CC9605.</title>
        <authorList>
            <consortium name="US DOE Joint Genome Institute"/>
            <person name="Copeland A."/>
            <person name="Lucas S."/>
            <person name="Lapidus A."/>
            <person name="Barry K."/>
            <person name="Detter J.C."/>
            <person name="Glavina T."/>
            <person name="Hammon N."/>
            <person name="Israni S."/>
            <person name="Pitluck S."/>
            <person name="Schmutz J."/>
            <person name="Martinez M."/>
            <person name="Larimer F."/>
            <person name="Land M."/>
            <person name="Kyrpides N."/>
            <person name="Ivanova N."/>
            <person name="Richardson P."/>
        </authorList>
    </citation>
    <scope>NUCLEOTIDE SEQUENCE [LARGE SCALE GENOMIC DNA]</scope>
    <source>
        <strain>CC9605</strain>
    </source>
</reference>
<organism>
    <name type="scientific">Synechococcus sp. (strain CC9605)</name>
    <dbReference type="NCBI Taxonomy" id="110662"/>
    <lineage>
        <taxon>Bacteria</taxon>
        <taxon>Bacillati</taxon>
        <taxon>Cyanobacteriota</taxon>
        <taxon>Cyanophyceae</taxon>
        <taxon>Synechococcales</taxon>
        <taxon>Synechococcaceae</taxon>
        <taxon>Synechococcus</taxon>
    </lineage>
</organism>